<dbReference type="EC" id="2.7.1.16" evidence="1"/>
<dbReference type="EMBL" id="AP009351">
    <property type="protein sequence ID" value="BAF66786.1"/>
    <property type="molecule type" value="Genomic_DNA"/>
</dbReference>
<dbReference type="RefSeq" id="WP_000122340.1">
    <property type="nucleotide sequence ID" value="NZ_JBBIAE010000002.1"/>
</dbReference>
<dbReference type="SMR" id="A6QEK4"/>
<dbReference type="KEGG" id="sae:NWMN_0514"/>
<dbReference type="HOGENOM" id="CLU_009281_9_1_9"/>
<dbReference type="UniPathway" id="UPA00145">
    <property type="reaction ID" value="UER00566"/>
</dbReference>
<dbReference type="Proteomes" id="UP000006386">
    <property type="component" value="Chromosome"/>
</dbReference>
<dbReference type="GO" id="GO:0005737">
    <property type="term" value="C:cytoplasm"/>
    <property type="evidence" value="ECO:0007669"/>
    <property type="project" value="TreeGrafter"/>
</dbReference>
<dbReference type="GO" id="GO:0005524">
    <property type="term" value="F:ATP binding"/>
    <property type="evidence" value="ECO:0007669"/>
    <property type="project" value="UniProtKB-KW"/>
</dbReference>
<dbReference type="GO" id="GO:0019150">
    <property type="term" value="F:D-ribulokinase activity"/>
    <property type="evidence" value="ECO:0007669"/>
    <property type="project" value="TreeGrafter"/>
</dbReference>
<dbReference type="GO" id="GO:0008741">
    <property type="term" value="F:ribulokinase activity"/>
    <property type="evidence" value="ECO:0007669"/>
    <property type="project" value="UniProtKB-UniRule"/>
</dbReference>
<dbReference type="GO" id="GO:0019569">
    <property type="term" value="P:L-arabinose catabolic process to xylulose 5-phosphate"/>
    <property type="evidence" value="ECO:0007669"/>
    <property type="project" value="UniProtKB-UniRule"/>
</dbReference>
<dbReference type="CDD" id="cd07781">
    <property type="entry name" value="ASKHA_NBD_FGGY_L-RBK"/>
    <property type="match status" value="1"/>
</dbReference>
<dbReference type="Gene3D" id="1.20.58.2240">
    <property type="match status" value="1"/>
</dbReference>
<dbReference type="Gene3D" id="3.30.420.40">
    <property type="match status" value="1"/>
</dbReference>
<dbReference type="HAMAP" id="MF_00520">
    <property type="entry name" value="Ribulokinase"/>
    <property type="match status" value="1"/>
</dbReference>
<dbReference type="InterPro" id="IPR043129">
    <property type="entry name" value="ATPase_NBD"/>
</dbReference>
<dbReference type="InterPro" id="IPR000577">
    <property type="entry name" value="Carb_kinase_FGGY"/>
</dbReference>
<dbReference type="InterPro" id="IPR018485">
    <property type="entry name" value="FGGY_C"/>
</dbReference>
<dbReference type="InterPro" id="IPR018484">
    <property type="entry name" value="FGGY_N"/>
</dbReference>
<dbReference type="InterPro" id="IPR005929">
    <property type="entry name" value="Ribulokinase"/>
</dbReference>
<dbReference type="NCBIfam" id="NF003154">
    <property type="entry name" value="PRK04123.1"/>
    <property type="match status" value="1"/>
</dbReference>
<dbReference type="PANTHER" id="PTHR43435:SF4">
    <property type="entry name" value="FGGY CARBOHYDRATE KINASE DOMAIN-CONTAINING PROTEIN"/>
    <property type="match status" value="1"/>
</dbReference>
<dbReference type="PANTHER" id="PTHR43435">
    <property type="entry name" value="RIBULOKINASE"/>
    <property type="match status" value="1"/>
</dbReference>
<dbReference type="Pfam" id="PF02782">
    <property type="entry name" value="FGGY_C"/>
    <property type="match status" value="1"/>
</dbReference>
<dbReference type="Pfam" id="PF00370">
    <property type="entry name" value="FGGY_N"/>
    <property type="match status" value="1"/>
</dbReference>
<dbReference type="PIRSF" id="PIRSF000538">
    <property type="entry name" value="GlpK"/>
    <property type="match status" value="1"/>
</dbReference>
<dbReference type="SUPFAM" id="SSF53067">
    <property type="entry name" value="Actin-like ATPase domain"/>
    <property type="match status" value="2"/>
</dbReference>
<proteinExistence type="inferred from homology"/>
<comment type="catalytic activity">
    <reaction evidence="1">
        <text>D-ribulose + ATP = D-ribulose 5-phosphate + ADP + H(+)</text>
        <dbReference type="Rhea" id="RHEA:17601"/>
        <dbReference type="ChEBI" id="CHEBI:15378"/>
        <dbReference type="ChEBI" id="CHEBI:17173"/>
        <dbReference type="ChEBI" id="CHEBI:30616"/>
        <dbReference type="ChEBI" id="CHEBI:58121"/>
        <dbReference type="ChEBI" id="CHEBI:456216"/>
        <dbReference type="EC" id="2.7.1.16"/>
    </reaction>
</comment>
<comment type="catalytic activity">
    <reaction evidence="1">
        <text>L-ribulose + ATP = L-ribulose 5-phosphate + ADP + H(+)</text>
        <dbReference type="Rhea" id="RHEA:22072"/>
        <dbReference type="ChEBI" id="CHEBI:15378"/>
        <dbReference type="ChEBI" id="CHEBI:16880"/>
        <dbReference type="ChEBI" id="CHEBI:30616"/>
        <dbReference type="ChEBI" id="CHEBI:58226"/>
        <dbReference type="ChEBI" id="CHEBI:456216"/>
        <dbReference type="EC" id="2.7.1.16"/>
    </reaction>
</comment>
<comment type="pathway">
    <text evidence="1">Carbohydrate degradation; L-arabinose degradation via L-ribulose; D-xylulose 5-phosphate from L-arabinose (bacterial route): step 2/3.</text>
</comment>
<comment type="similarity">
    <text evidence="1">Belongs to the ribulokinase family.</text>
</comment>
<evidence type="ECO:0000255" key="1">
    <source>
        <dbReference type="HAMAP-Rule" id="MF_00520"/>
    </source>
</evidence>
<gene>
    <name evidence="1" type="primary">araB</name>
    <name type="ordered locus">NWMN_0514</name>
</gene>
<sequence>MSYSIGIDYGTASGRVFLINTTNGQVVSKFVKPYTHGVIESELNGLKIPHTYALQNSNDYLEIMEEGISYIVRESKIDPDNIVGIGIDFTSSTIIFTDENLNPVHNLKQFKNNPHAYVKLWKHHGAYKEAEKLYQTAIENNNKWLGHYGYNVSSEWMIPKIMEVMNRAPEIMEKTAYIMEAGDWIVNKLTNKNVRSNCGLGFKAFWEEETGFHYDLFDKIDPKLSKVIQDKVSAPVVNIGEAVGKLDDKMAQKLGLSKETMVSPFIIDAHASLLGIGSEKDKEMTMVMGTSTCHLMLNEKQHQVPGISGSVKGAIIPELFAYEAGQSAVGDLFEYVAKQAPKSYVDEAENRNMTVFELMNEKIKHQMPGESGLIALDWHNGNRSVLSDSNLTGCIFGLTLQTKHEDIYRAYLEATAFGTKMIMQQYQDWHMEVEKVFACGGIPKKNAVMMDIYANVLNKKLIVMDSEYAPAIGAAILGAVSGGAHNSINDAVDAMKEPILYEINPEAEKVQRYETLFKAYKALHDIHGYKKANIMKDIQSLRVEG</sequence>
<accession>A6QEK4</accession>
<protein>
    <recommendedName>
        <fullName evidence="1">Ribulokinase</fullName>
        <ecNumber evidence="1">2.7.1.16</ecNumber>
    </recommendedName>
</protein>
<organism>
    <name type="scientific">Staphylococcus aureus (strain Newman)</name>
    <dbReference type="NCBI Taxonomy" id="426430"/>
    <lineage>
        <taxon>Bacteria</taxon>
        <taxon>Bacillati</taxon>
        <taxon>Bacillota</taxon>
        <taxon>Bacilli</taxon>
        <taxon>Bacillales</taxon>
        <taxon>Staphylococcaceae</taxon>
        <taxon>Staphylococcus</taxon>
    </lineage>
</organism>
<keyword id="KW-0054">Arabinose catabolism</keyword>
<keyword id="KW-0067">ATP-binding</keyword>
<keyword id="KW-0119">Carbohydrate metabolism</keyword>
<keyword id="KW-0418">Kinase</keyword>
<keyword id="KW-0547">Nucleotide-binding</keyword>
<keyword id="KW-0808">Transferase</keyword>
<feature type="chain" id="PRO_1000072490" description="Ribulokinase">
    <location>
        <begin position="1"/>
        <end position="545"/>
    </location>
</feature>
<reference key="1">
    <citation type="journal article" date="2008" name="J. Bacteriol.">
        <title>Genome sequence of Staphylococcus aureus strain Newman and comparative analysis of staphylococcal genomes: polymorphism and evolution of two major pathogenicity islands.</title>
        <authorList>
            <person name="Baba T."/>
            <person name="Bae T."/>
            <person name="Schneewind O."/>
            <person name="Takeuchi F."/>
            <person name="Hiramatsu K."/>
        </authorList>
    </citation>
    <scope>NUCLEOTIDE SEQUENCE [LARGE SCALE GENOMIC DNA]</scope>
    <source>
        <strain>Newman</strain>
    </source>
</reference>
<name>ARAB_STAAE</name>